<proteinExistence type="inferred from homology"/>
<accession>Q8TIU3</accession>
<gene>
    <name evidence="1" type="primary">serS</name>
    <name type="ordered locus">MA_4048</name>
</gene>
<organism>
    <name type="scientific">Methanosarcina acetivorans (strain ATCC 35395 / DSM 2834 / JCM 12185 / C2A)</name>
    <dbReference type="NCBI Taxonomy" id="188937"/>
    <lineage>
        <taxon>Archaea</taxon>
        <taxon>Methanobacteriati</taxon>
        <taxon>Methanobacteriota</taxon>
        <taxon>Stenosarchaea group</taxon>
        <taxon>Methanomicrobia</taxon>
        <taxon>Methanosarcinales</taxon>
        <taxon>Methanosarcinaceae</taxon>
        <taxon>Methanosarcina</taxon>
    </lineage>
</organism>
<comment type="function">
    <text evidence="1">Catalyzes the attachment of serine to tRNA(Ser). Is also able to aminoacylate tRNA(Sec) with serine, to form the misacylated tRNA L-seryl-tRNA(Sec), which will be further converted into selenocysteinyl-tRNA(Sec).</text>
</comment>
<comment type="catalytic activity">
    <reaction evidence="1">
        <text>tRNA(Ser) + L-serine + ATP = L-seryl-tRNA(Ser) + AMP + diphosphate + H(+)</text>
        <dbReference type="Rhea" id="RHEA:12292"/>
        <dbReference type="Rhea" id="RHEA-COMP:9669"/>
        <dbReference type="Rhea" id="RHEA-COMP:9703"/>
        <dbReference type="ChEBI" id="CHEBI:15378"/>
        <dbReference type="ChEBI" id="CHEBI:30616"/>
        <dbReference type="ChEBI" id="CHEBI:33019"/>
        <dbReference type="ChEBI" id="CHEBI:33384"/>
        <dbReference type="ChEBI" id="CHEBI:78442"/>
        <dbReference type="ChEBI" id="CHEBI:78533"/>
        <dbReference type="ChEBI" id="CHEBI:456215"/>
        <dbReference type="EC" id="6.1.1.11"/>
    </reaction>
</comment>
<comment type="catalytic activity">
    <reaction evidence="1">
        <text>tRNA(Sec) + L-serine + ATP = L-seryl-tRNA(Sec) + AMP + diphosphate + H(+)</text>
        <dbReference type="Rhea" id="RHEA:42580"/>
        <dbReference type="Rhea" id="RHEA-COMP:9742"/>
        <dbReference type="Rhea" id="RHEA-COMP:10128"/>
        <dbReference type="ChEBI" id="CHEBI:15378"/>
        <dbReference type="ChEBI" id="CHEBI:30616"/>
        <dbReference type="ChEBI" id="CHEBI:33019"/>
        <dbReference type="ChEBI" id="CHEBI:33384"/>
        <dbReference type="ChEBI" id="CHEBI:78442"/>
        <dbReference type="ChEBI" id="CHEBI:78533"/>
        <dbReference type="ChEBI" id="CHEBI:456215"/>
        <dbReference type="EC" id="6.1.1.11"/>
    </reaction>
</comment>
<comment type="pathway">
    <text evidence="1">Aminoacyl-tRNA biosynthesis; selenocysteinyl-tRNA(Sec) biosynthesis; L-seryl-tRNA(Sec) from L-serine and tRNA(Sec): step 1/1.</text>
</comment>
<comment type="subunit">
    <text evidence="1">Homodimer. The tRNA molecule binds across the dimer.</text>
</comment>
<comment type="subcellular location">
    <subcellularLocation>
        <location evidence="1">Cytoplasm</location>
    </subcellularLocation>
</comment>
<comment type="domain">
    <text evidence="1">Consists of two distinct domains, a catalytic core and a N-terminal extension that is involved in tRNA binding.</text>
</comment>
<comment type="similarity">
    <text evidence="1">Belongs to the class-II aminoacyl-tRNA synthetase family. Type-1 seryl-tRNA synthetase subfamily.</text>
</comment>
<sequence>MLELKFVRNNPDIVGRALVNRNMGTELIDSLLEYDVAWRKCLTEGDSLKHKRNVVTREIAQLKKENKDTLSKINEMQDINNRIKEIDDKIRDYKSKINEIMLSIPNIPSETTPVGKDENDNPVVRVVGEKKKFTFTPKPHWEIGEALDILDFERGAKIAGQGFTVYKGLGAKLERALINFMLDVHTRQGYLEVFPPVLINEKAMTGTGQLPKFKEDMYLCCADGYYLAPTAEVPVTNLFMDEYMENLPVSLTAYTACFRREAGKHGQDTRGIIRQHQFNKVELVKFVKPETSYEELEKLTLDAEEILKLLKLPYRLVTLCTGDLGFSAAKTYDIEVWVPTQEKYREISSCSNFENFQARRANIRFRTPEGPQFVHTLNGSGLAVGRTVVAILENYQREDGSVEIPEVLRPYMGGVEEIREE</sequence>
<feature type="chain" id="PRO_0000122173" description="Serine--tRNA ligase">
    <location>
        <begin position="1"/>
        <end position="421"/>
    </location>
</feature>
<feature type="binding site" evidence="1">
    <location>
        <begin position="230"/>
        <end position="232"/>
    </location>
    <ligand>
        <name>L-serine</name>
        <dbReference type="ChEBI" id="CHEBI:33384"/>
    </ligand>
</feature>
<feature type="binding site" evidence="1">
    <location>
        <begin position="259"/>
        <end position="261"/>
    </location>
    <ligand>
        <name>ATP</name>
        <dbReference type="ChEBI" id="CHEBI:30616"/>
    </ligand>
</feature>
<feature type="binding site" evidence="1">
    <location>
        <position position="282"/>
    </location>
    <ligand>
        <name>L-serine</name>
        <dbReference type="ChEBI" id="CHEBI:33384"/>
    </ligand>
</feature>
<feature type="binding site" evidence="1">
    <location>
        <begin position="346"/>
        <end position="349"/>
    </location>
    <ligand>
        <name>ATP</name>
        <dbReference type="ChEBI" id="CHEBI:30616"/>
    </ligand>
</feature>
<feature type="binding site" evidence="1">
    <location>
        <position position="380"/>
    </location>
    <ligand>
        <name>L-serine</name>
        <dbReference type="ChEBI" id="CHEBI:33384"/>
    </ligand>
</feature>
<reference key="1">
    <citation type="journal article" date="2002" name="Genome Res.">
        <title>The genome of Methanosarcina acetivorans reveals extensive metabolic and physiological diversity.</title>
        <authorList>
            <person name="Galagan J.E."/>
            <person name="Nusbaum C."/>
            <person name="Roy A."/>
            <person name="Endrizzi M.G."/>
            <person name="Macdonald P."/>
            <person name="FitzHugh W."/>
            <person name="Calvo S."/>
            <person name="Engels R."/>
            <person name="Smirnov S."/>
            <person name="Atnoor D."/>
            <person name="Brown A."/>
            <person name="Allen N."/>
            <person name="Naylor J."/>
            <person name="Stange-Thomann N."/>
            <person name="DeArellano K."/>
            <person name="Johnson R."/>
            <person name="Linton L."/>
            <person name="McEwan P."/>
            <person name="McKernan K."/>
            <person name="Talamas J."/>
            <person name="Tirrell A."/>
            <person name="Ye W."/>
            <person name="Zimmer A."/>
            <person name="Barber R.D."/>
            <person name="Cann I."/>
            <person name="Graham D.E."/>
            <person name="Grahame D.A."/>
            <person name="Guss A.M."/>
            <person name="Hedderich R."/>
            <person name="Ingram-Smith C."/>
            <person name="Kuettner H.C."/>
            <person name="Krzycki J.A."/>
            <person name="Leigh J.A."/>
            <person name="Li W."/>
            <person name="Liu J."/>
            <person name="Mukhopadhyay B."/>
            <person name="Reeve J.N."/>
            <person name="Smith K."/>
            <person name="Springer T.A."/>
            <person name="Umayam L.A."/>
            <person name="White O."/>
            <person name="White R.H."/>
            <person name="de Macario E.C."/>
            <person name="Ferry J.G."/>
            <person name="Jarrell K.F."/>
            <person name="Jing H."/>
            <person name="Macario A.J.L."/>
            <person name="Paulsen I.T."/>
            <person name="Pritchett M."/>
            <person name="Sowers K.R."/>
            <person name="Swanson R.V."/>
            <person name="Zinder S.H."/>
            <person name="Lander E."/>
            <person name="Metcalf W.W."/>
            <person name="Birren B."/>
        </authorList>
    </citation>
    <scope>NUCLEOTIDE SEQUENCE [LARGE SCALE GENOMIC DNA]</scope>
    <source>
        <strain>ATCC 35395 / DSM 2834 / JCM 12185 / C2A</strain>
    </source>
</reference>
<name>SYS_METAC</name>
<keyword id="KW-0030">Aminoacyl-tRNA synthetase</keyword>
<keyword id="KW-0067">ATP-binding</keyword>
<keyword id="KW-0963">Cytoplasm</keyword>
<keyword id="KW-0436">Ligase</keyword>
<keyword id="KW-0547">Nucleotide-binding</keyword>
<keyword id="KW-0648">Protein biosynthesis</keyword>
<keyword id="KW-1185">Reference proteome</keyword>
<dbReference type="EC" id="6.1.1.11" evidence="1"/>
<dbReference type="EMBL" id="AE010299">
    <property type="protein sequence ID" value="AAM07396.1"/>
    <property type="molecule type" value="Genomic_DNA"/>
</dbReference>
<dbReference type="RefSeq" id="WP_011023941.1">
    <property type="nucleotide sequence ID" value="NC_003552.1"/>
</dbReference>
<dbReference type="SMR" id="Q8TIU3"/>
<dbReference type="STRING" id="188937.MA_4048"/>
<dbReference type="EnsemblBacteria" id="AAM07396">
    <property type="protein sequence ID" value="AAM07396"/>
    <property type="gene ID" value="MA_4048"/>
</dbReference>
<dbReference type="GeneID" id="1475942"/>
<dbReference type="KEGG" id="mac:MA_4048"/>
<dbReference type="HOGENOM" id="CLU_023797_1_1_2"/>
<dbReference type="InParanoid" id="Q8TIU3"/>
<dbReference type="OrthoDB" id="35932at2157"/>
<dbReference type="PhylomeDB" id="Q8TIU3"/>
<dbReference type="UniPathway" id="UPA00906">
    <property type="reaction ID" value="UER00895"/>
</dbReference>
<dbReference type="Proteomes" id="UP000002487">
    <property type="component" value="Chromosome"/>
</dbReference>
<dbReference type="GO" id="GO:0005737">
    <property type="term" value="C:cytoplasm"/>
    <property type="evidence" value="ECO:0007669"/>
    <property type="project" value="UniProtKB-SubCell"/>
</dbReference>
<dbReference type="GO" id="GO:0005524">
    <property type="term" value="F:ATP binding"/>
    <property type="evidence" value="ECO:0007669"/>
    <property type="project" value="UniProtKB-UniRule"/>
</dbReference>
<dbReference type="GO" id="GO:0004828">
    <property type="term" value="F:serine-tRNA ligase activity"/>
    <property type="evidence" value="ECO:0007669"/>
    <property type="project" value="UniProtKB-UniRule"/>
</dbReference>
<dbReference type="GO" id="GO:0016260">
    <property type="term" value="P:selenocysteine biosynthetic process"/>
    <property type="evidence" value="ECO:0007669"/>
    <property type="project" value="UniProtKB-UniRule"/>
</dbReference>
<dbReference type="GO" id="GO:0006434">
    <property type="term" value="P:seryl-tRNA aminoacylation"/>
    <property type="evidence" value="ECO:0007669"/>
    <property type="project" value="UniProtKB-UniRule"/>
</dbReference>
<dbReference type="CDD" id="cd00770">
    <property type="entry name" value="SerRS_core"/>
    <property type="match status" value="1"/>
</dbReference>
<dbReference type="Gene3D" id="3.30.930.10">
    <property type="entry name" value="Bira Bifunctional Protein, Domain 2"/>
    <property type="match status" value="1"/>
</dbReference>
<dbReference type="Gene3D" id="1.10.287.40">
    <property type="entry name" value="Serine-tRNA synthetase, tRNA binding domain"/>
    <property type="match status" value="1"/>
</dbReference>
<dbReference type="HAMAP" id="MF_00176">
    <property type="entry name" value="Ser_tRNA_synth_type1"/>
    <property type="match status" value="1"/>
</dbReference>
<dbReference type="InterPro" id="IPR002314">
    <property type="entry name" value="aa-tRNA-synt_IIb"/>
</dbReference>
<dbReference type="InterPro" id="IPR006195">
    <property type="entry name" value="aa-tRNA-synth_II"/>
</dbReference>
<dbReference type="InterPro" id="IPR045864">
    <property type="entry name" value="aa-tRNA-synth_II/BPL/LPL"/>
</dbReference>
<dbReference type="InterPro" id="IPR002317">
    <property type="entry name" value="Ser-tRNA-ligase_type_1"/>
</dbReference>
<dbReference type="InterPro" id="IPR015866">
    <property type="entry name" value="Ser-tRNA-synth_1_N"/>
</dbReference>
<dbReference type="InterPro" id="IPR042103">
    <property type="entry name" value="SerRS_1_N_sf"/>
</dbReference>
<dbReference type="InterPro" id="IPR033729">
    <property type="entry name" value="SerRS_core"/>
</dbReference>
<dbReference type="InterPro" id="IPR010978">
    <property type="entry name" value="tRNA-bd_arm"/>
</dbReference>
<dbReference type="NCBIfam" id="TIGR00414">
    <property type="entry name" value="serS"/>
    <property type="match status" value="1"/>
</dbReference>
<dbReference type="PANTHER" id="PTHR43697:SF1">
    <property type="entry name" value="SERINE--TRNA LIGASE"/>
    <property type="match status" value="1"/>
</dbReference>
<dbReference type="PANTHER" id="PTHR43697">
    <property type="entry name" value="SERYL-TRNA SYNTHETASE"/>
    <property type="match status" value="1"/>
</dbReference>
<dbReference type="Pfam" id="PF02403">
    <property type="entry name" value="Seryl_tRNA_N"/>
    <property type="match status" value="1"/>
</dbReference>
<dbReference type="Pfam" id="PF00587">
    <property type="entry name" value="tRNA-synt_2b"/>
    <property type="match status" value="1"/>
</dbReference>
<dbReference type="PIRSF" id="PIRSF001529">
    <property type="entry name" value="Ser-tRNA-synth_IIa"/>
    <property type="match status" value="1"/>
</dbReference>
<dbReference type="PRINTS" id="PR00981">
    <property type="entry name" value="TRNASYNTHSER"/>
</dbReference>
<dbReference type="SUPFAM" id="SSF55681">
    <property type="entry name" value="Class II aaRS and biotin synthetases"/>
    <property type="match status" value="1"/>
</dbReference>
<dbReference type="SUPFAM" id="SSF46589">
    <property type="entry name" value="tRNA-binding arm"/>
    <property type="match status" value="1"/>
</dbReference>
<dbReference type="PROSITE" id="PS50862">
    <property type="entry name" value="AA_TRNA_LIGASE_II"/>
    <property type="match status" value="1"/>
</dbReference>
<protein>
    <recommendedName>
        <fullName evidence="1">Serine--tRNA ligase</fullName>
        <ecNumber evidence="1">6.1.1.11</ecNumber>
    </recommendedName>
    <alternativeName>
        <fullName evidence="1">Seryl-tRNA synthetase</fullName>
        <shortName evidence="1">SerRS</shortName>
    </alternativeName>
    <alternativeName>
        <fullName evidence="1">Seryl-tRNA(Ser/Sec) synthetase</fullName>
    </alternativeName>
</protein>
<evidence type="ECO:0000255" key="1">
    <source>
        <dbReference type="HAMAP-Rule" id="MF_00176"/>
    </source>
</evidence>